<dbReference type="EC" id="1.1.99.40" evidence="5"/>
<dbReference type="EC" id="1.1.2.4"/>
<dbReference type="EMBL" id="U18795">
    <property type="protein sequence ID" value="AAB65016.1"/>
    <property type="molecule type" value="Genomic_DNA"/>
</dbReference>
<dbReference type="EMBL" id="BK006939">
    <property type="protein sequence ID" value="DAA07584.1"/>
    <property type="molecule type" value="Genomic_DNA"/>
</dbReference>
<dbReference type="PIR" id="S50518">
    <property type="entry name" value="S50518"/>
</dbReference>
<dbReference type="RefSeq" id="NP_010843.1">
    <property type="nucleotide sequence ID" value="NM_001178886.1"/>
</dbReference>
<dbReference type="SMR" id="P39976"/>
<dbReference type="BioGRID" id="36660">
    <property type="interactions" value="88"/>
</dbReference>
<dbReference type="DIP" id="DIP-6418N"/>
<dbReference type="FunCoup" id="P39976">
    <property type="interactions" value="572"/>
</dbReference>
<dbReference type="IntAct" id="P39976">
    <property type="interactions" value="12"/>
</dbReference>
<dbReference type="MINT" id="P39976"/>
<dbReference type="STRING" id="4932.YEL071W"/>
<dbReference type="iPTMnet" id="P39976"/>
<dbReference type="PaxDb" id="4932-YEL071W"/>
<dbReference type="PeptideAtlas" id="P39976"/>
<dbReference type="EnsemblFungi" id="YEL071W_mRNA">
    <property type="protein sequence ID" value="YEL071W"/>
    <property type="gene ID" value="YEL071W"/>
</dbReference>
<dbReference type="GeneID" id="856638"/>
<dbReference type="KEGG" id="sce:YEL071W"/>
<dbReference type="AGR" id="SGD:S000000797"/>
<dbReference type="SGD" id="S000000797">
    <property type="gene designation" value="DLD3"/>
</dbReference>
<dbReference type="VEuPathDB" id="FungiDB:YEL071W"/>
<dbReference type="eggNOG" id="KOG1232">
    <property type="taxonomic scope" value="Eukaryota"/>
</dbReference>
<dbReference type="GeneTree" id="ENSGT00550000075086"/>
<dbReference type="HOGENOM" id="CLU_017779_4_1_1"/>
<dbReference type="InParanoid" id="P39976"/>
<dbReference type="OMA" id="FDRTVVC"/>
<dbReference type="OrthoDB" id="5332616at2759"/>
<dbReference type="BioCyc" id="YEAST:YEL071W-MONOMER"/>
<dbReference type="BRENDA" id="1.1.99.40">
    <property type="organism ID" value="984"/>
</dbReference>
<dbReference type="BioGRID-ORCS" id="856638">
    <property type="hits" value="0 hits in 10 CRISPR screens"/>
</dbReference>
<dbReference type="CD-CODE" id="E03F929F">
    <property type="entry name" value="Stress granule"/>
</dbReference>
<dbReference type="PRO" id="PR:P39976"/>
<dbReference type="Proteomes" id="UP000002311">
    <property type="component" value="Chromosome V"/>
</dbReference>
<dbReference type="RNAct" id="P39976">
    <property type="molecule type" value="protein"/>
</dbReference>
<dbReference type="GO" id="GO:0005737">
    <property type="term" value="C:cytoplasm"/>
    <property type="evidence" value="ECO:0000314"/>
    <property type="project" value="SGD"/>
</dbReference>
<dbReference type="GO" id="GO:0005739">
    <property type="term" value="C:mitochondrion"/>
    <property type="evidence" value="ECO:0000318"/>
    <property type="project" value="GO_Central"/>
</dbReference>
<dbReference type="GO" id="GO:0099615">
    <property type="term" value="F:(D)-2-hydroxyglutarate-pyruvate transhydrogenase activity"/>
    <property type="evidence" value="ECO:0000314"/>
    <property type="project" value="SGD"/>
</dbReference>
<dbReference type="GO" id="GO:0004458">
    <property type="term" value="F:D-lactate dehydrogenase (cytochrome) activity"/>
    <property type="evidence" value="ECO:0000314"/>
    <property type="project" value="SGD"/>
</dbReference>
<dbReference type="GO" id="GO:0071949">
    <property type="term" value="F:FAD binding"/>
    <property type="evidence" value="ECO:0000314"/>
    <property type="project" value="SGD"/>
</dbReference>
<dbReference type="GO" id="GO:0030447">
    <property type="term" value="P:filamentous growth"/>
    <property type="evidence" value="ECO:0000315"/>
    <property type="project" value="SGD"/>
</dbReference>
<dbReference type="GO" id="GO:0019249">
    <property type="term" value="P:lactate biosynthetic process"/>
    <property type="evidence" value="ECO:0000315"/>
    <property type="project" value="SGD"/>
</dbReference>
<dbReference type="FunFam" id="3.30.70.2190:FF:000001">
    <property type="entry name" value="D-2-hydroxyglutarate dehydrogenase mitochondrial"/>
    <property type="match status" value="1"/>
</dbReference>
<dbReference type="FunFam" id="3.30.70.2740:FF:000002">
    <property type="entry name" value="D-2-hydroxyglutarate dehydrogenase mitochondrial"/>
    <property type="match status" value="1"/>
</dbReference>
<dbReference type="FunFam" id="3.30.43.10:FF:000002">
    <property type="entry name" value="D-2-hydroxyglutarate dehydrogenase, mitochondrial"/>
    <property type="match status" value="1"/>
</dbReference>
<dbReference type="FunFam" id="3.30.465.10:FF:000001">
    <property type="entry name" value="D-2-hydroxyglutarate dehydrogenase, mitochondrial"/>
    <property type="match status" value="1"/>
</dbReference>
<dbReference type="FunFam" id="1.10.45.10:FF:000001">
    <property type="entry name" value="D-lactate dehydrogenase mitochondrial"/>
    <property type="match status" value="1"/>
</dbReference>
<dbReference type="Gene3D" id="3.30.465.10">
    <property type="match status" value="1"/>
</dbReference>
<dbReference type="Gene3D" id="3.30.70.2190">
    <property type="match status" value="1"/>
</dbReference>
<dbReference type="Gene3D" id="3.30.70.2740">
    <property type="match status" value="1"/>
</dbReference>
<dbReference type="Gene3D" id="3.30.43.10">
    <property type="entry name" value="Uridine Diphospho-n-acetylenolpyruvylglucosamine Reductase, domain 2"/>
    <property type="match status" value="1"/>
</dbReference>
<dbReference type="Gene3D" id="1.10.45.10">
    <property type="entry name" value="Vanillyl-alcohol Oxidase, Chain A, domain 4"/>
    <property type="match status" value="1"/>
</dbReference>
<dbReference type="InterPro" id="IPR004113">
    <property type="entry name" value="FAD-bd_oxidored_4_C"/>
</dbReference>
<dbReference type="InterPro" id="IPR016166">
    <property type="entry name" value="FAD-bd_PCMH"/>
</dbReference>
<dbReference type="InterPro" id="IPR036318">
    <property type="entry name" value="FAD-bd_PCMH-like_sf"/>
</dbReference>
<dbReference type="InterPro" id="IPR016167">
    <property type="entry name" value="FAD-bd_PCMH_sub1"/>
</dbReference>
<dbReference type="InterPro" id="IPR016169">
    <property type="entry name" value="FAD-bd_PCMH_sub2"/>
</dbReference>
<dbReference type="InterPro" id="IPR016164">
    <property type="entry name" value="FAD-linked_Oxase-like_C"/>
</dbReference>
<dbReference type="InterPro" id="IPR051264">
    <property type="entry name" value="FAD-oxidored/transferase_4"/>
</dbReference>
<dbReference type="InterPro" id="IPR006094">
    <property type="entry name" value="Oxid_FAD_bind_N"/>
</dbReference>
<dbReference type="InterPro" id="IPR016171">
    <property type="entry name" value="Vanillyl_alc_oxidase_C-sub2"/>
</dbReference>
<dbReference type="PANTHER" id="PTHR43716">
    <property type="entry name" value="D-2-HYDROXYGLUTARATE DEHYDROGENASE, MITOCHONDRIAL"/>
    <property type="match status" value="1"/>
</dbReference>
<dbReference type="PANTHER" id="PTHR43716:SF1">
    <property type="entry name" value="D-2-HYDROXYGLUTARATE DEHYDROGENASE, MITOCHONDRIAL"/>
    <property type="match status" value="1"/>
</dbReference>
<dbReference type="Pfam" id="PF02913">
    <property type="entry name" value="FAD-oxidase_C"/>
    <property type="match status" value="1"/>
</dbReference>
<dbReference type="Pfam" id="PF01565">
    <property type="entry name" value="FAD_binding_4"/>
    <property type="match status" value="1"/>
</dbReference>
<dbReference type="SUPFAM" id="SSF56176">
    <property type="entry name" value="FAD-binding/transporter-associated domain-like"/>
    <property type="match status" value="1"/>
</dbReference>
<dbReference type="SUPFAM" id="SSF55103">
    <property type="entry name" value="FAD-linked oxidases, C-terminal domain"/>
    <property type="match status" value="1"/>
</dbReference>
<dbReference type="PROSITE" id="PS51387">
    <property type="entry name" value="FAD_PCMH"/>
    <property type="match status" value="1"/>
</dbReference>
<comment type="function">
    <text evidence="5">Catalyzes the reversible oxidation of (R)-2-hydroxyglutarate to 2-oxoglutarate coupled to reduction of pyruvate to (R)-lactate. Can also use oxaloacetate as electron acceptor instead of pyruvate producing (R)-malate.</text>
</comment>
<comment type="catalytic activity">
    <reaction>
        <text>(R)-lactate + 2 Fe(III)-[cytochrome c] = 2 Fe(II)-[cytochrome c] + pyruvate + 2 H(+)</text>
        <dbReference type="Rhea" id="RHEA:13521"/>
        <dbReference type="Rhea" id="RHEA-COMP:10350"/>
        <dbReference type="Rhea" id="RHEA-COMP:14399"/>
        <dbReference type="ChEBI" id="CHEBI:15361"/>
        <dbReference type="ChEBI" id="CHEBI:15378"/>
        <dbReference type="ChEBI" id="CHEBI:16004"/>
        <dbReference type="ChEBI" id="CHEBI:29033"/>
        <dbReference type="ChEBI" id="CHEBI:29034"/>
        <dbReference type="EC" id="1.1.2.4"/>
    </reaction>
</comment>
<comment type="catalytic activity">
    <reaction evidence="5">
        <text>(R)-2-hydroxyglutarate + pyruvate = (R)-lactate + 2-oxoglutarate</text>
        <dbReference type="Rhea" id="RHEA:51608"/>
        <dbReference type="ChEBI" id="CHEBI:15361"/>
        <dbReference type="ChEBI" id="CHEBI:15801"/>
        <dbReference type="ChEBI" id="CHEBI:16004"/>
        <dbReference type="ChEBI" id="CHEBI:16810"/>
        <dbReference type="EC" id="1.1.99.40"/>
    </reaction>
</comment>
<comment type="cofactor">
    <cofactor evidence="7">
        <name>FAD</name>
        <dbReference type="ChEBI" id="CHEBI:57692"/>
    </cofactor>
</comment>
<comment type="biophysicochemical properties">
    <kinetics>
        <KM evidence="5">111 uM for (R)-2-hydroxyglutarate</KM>
        <KM evidence="5">450 uM for pyruvate</KM>
        <KM evidence="5">533 uM for (R)-lactate</KM>
        <text evidence="5">kcat is 4.0 sec(-1) for (R)-2-hydroxyglutarate oxidation with pyruvate as electron acceptor. kcat is 6.6 sec(-1) for (R)-2-hydroxyglutarate oxidation with DCIP as electron acceptor. kcat is 4.9 sec(-1) for pyruvate reduction with (R)-2-hydroxyglutarate as electron donor. kcat is 16.5 sec(-1) for (R)-lactate reduction with DCIP as electron donor.</text>
    </kinetics>
</comment>
<comment type="subcellular location">
    <subcellularLocation>
        <location evidence="2">Cytoplasm</location>
    </subcellularLocation>
</comment>
<comment type="miscellaneous">
    <text evidence="4">Present with 13000 molecules/cell in log phase SD medium.</text>
</comment>
<comment type="similarity">
    <text evidence="7">Belongs to the FAD-binding oxidoreductase/transferase type 4 family.</text>
</comment>
<keyword id="KW-0963">Cytoplasm</keyword>
<keyword id="KW-0274">FAD</keyword>
<keyword id="KW-0285">Flavoprotein</keyword>
<keyword id="KW-1017">Isopeptide bond</keyword>
<keyword id="KW-0560">Oxidoreductase</keyword>
<keyword id="KW-1185">Reference proteome</keyword>
<keyword id="KW-0832">Ubl conjugation</keyword>
<accession>P39976</accession>
<accession>D3DLI0</accession>
<evidence type="ECO:0000255" key="1">
    <source>
        <dbReference type="PROSITE-ProRule" id="PRU00718"/>
    </source>
</evidence>
<evidence type="ECO:0000269" key="2">
    <source>
    </source>
</evidence>
<evidence type="ECO:0000269" key="3">
    <source>
    </source>
</evidence>
<evidence type="ECO:0000269" key="4">
    <source>
    </source>
</evidence>
<evidence type="ECO:0000269" key="5">
    <source>
    </source>
</evidence>
<evidence type="ECO:0000303" key="6">
    <source>
    </source>
</evidence>
<evidence type="ECO:0000305" key="7"/>
<reference key="1">
    <citation type="journal article" date="1997" name="Nature">
        <title>The nucleotide sequence of Saccharomyces cerevisiae chromosome V.</title>
        <authorList>
            <person name="Dietrich F.S."/>
            <person name="Mulligan J.T."/>
            <person name="Hennessy K.M."/>
            <person name="Yelton M.A."/>
            <person name="Allen E."/>
            <person name="Araujo R."/>
            <person name="Aviles E."/>
            <person name="Berno A."/>
            <person name="Brennan T."/>
            <person name="Carpenter J."/>
            <person name="Chen E."/>
            <person name="Cherry J.M."/>
            <person name="Chung E."/>
            <person name="Duncan M."/>
            <person name="Guzman E."/>
            <person name="Hartzell G."/>
            <person name="Hunicke-Smith S."/>
            <person name="Hyman R.W."/>
            <person name="Kayser A."/>
            <person name="Komp C."/>
            <person name="Lashkari D."/>
            <person name="Lew H."/>
            <person name="Lin D."/>
            <person name="Mosedale D."/>
            <person name="Nakahara K."/>
            <person name="Namath A."/>
            <person name="Norgren R."/>
            <person name="Oefner P."/>
            <person name="Oh C."/>
            <person name="Petel F.X."/>
            <person name="Roberts D."/>
            <person name="Sehl P."/>
            <person name="Schramm S."/>
            <person name="Shogren T."/>
            <person name="Smith V."/>
            <person name="Taylor P."/>
            <person name="Wei Y."/>
            <person name="Botstein D."/>
            <person name="Davis R.W."/>
        </authorList>
    </citation>
    <scope>NUCLEOTIDE SEQUENCE [LARGE SCALE GENOMIC DNA]</scope>
    <source>
        <strain>ATCC 204508 / S288c</strain>
    </source>
</reference>
<reference key="2">
    <citation type="journal article" date="2014" name="G3 (Bethesda)">
        <title>The reference genome sequence of Saccharomyces cerevisiae: Then and now.</title>
        <authorList>
            <person name="Engel S.R."/>
            <person name="Dietrich F.S."/>
            <person name="Fisk D.G."/>
            <person name="Binkley G."/>
            <person name="Balakrishnan R."/>
            <person name="Costanzo M.C."/>
            <person name="Dwight S.S."/>
            <person name="Hitz B.C."/>
            <person name="Karra K."/>
            <person name="Nash R.S."/>
            <person name="Weng S."/>
            <person name="Wong E.D."/>
            <person name="Lloyd P."/>
            <person name="Skrzypek M.S."/>
            <person name="Miyasato S.R."/>
            <person name="Simison M."/>
            <person name="Cherry J.M."/>
        </authorList>
    </citation>
    <scope>GENOME REANNOTATION</scope>
    <source>
        <strain>ATCC 204508 / S288c</strain>
    </source>
</reference>
<reference key="3">
    <citation type="journal article" date="1999" name="Yeast">
        <title>Signalling between mitochondria and the nucleus regulates the expression of a new D-lactate dehydrogenase activity in yeast.</title>
        <authorList>
            <person name="Chelstowska A."/>
            <person name="Liu Z."/>
            <person name="Jia Y."/>
            <person name="Amberg D."/>
            <person name="Butow R.A."/>
        </authorList>
    </citation>
    <scope>SUBCELLULAR LOCATION</scope>
</reference>
<reference key="4">
    <citation type="journal article" date="2003" name="Nature">
        <title>Global analysis of protein expression in yeast.</title>
        <authorList>
            <person name="Ghaemmaghami S."/>
            <person name="Huh W.-K."/>
            <person name="Bower K."/>
            <person name="Howson R.W."/>
            <person name="Belle A."/>
            <person name="Dephoure N."/>
            <person name="O'Shea E.K."/>
            <person name="Weissman J.S."/>
        </authorList>
    </citation>
    <scope>LEVEL OF PROTEIN EXPRESSION [LARGE SCALE ANALYSIS]</scope>
</reference>
<reference key="5">
    <citation type="journal article" date="2003" name="Nat. Biotechnol.">
        <title>A proteomics approach to understanding protein ubiquitination.</title>
        <authorList>
            <person name="Peng J."/>
            <person name="Schwartz D."/>
            <person name="Elias J.E."/>
            <person name="Thoreen C.C."/>
            <person name="Cheng D."/>
            <person name="Marsischky G."/>
            <person name="Roelofs J."/>
            <person name="Finley D."/>
            <person name="Gygi S.P."/>
        </authorList>
    </citation>
    <scope>UBIQUITINATION [LARGE SCALE ANALYSIS] AT LYS-17</scope>
    <source>
        <strain>SUB592</strain>
    </source>
</reference>
<reference key="6">
    <citation type="journal article" date="2008" name="Mol. Cell. Proteomics">
        <title>A multidimensional chromatography technology for in-depth phosphoproteome analysis.</title>
        <authorList>
            <person name="Albuquerque C.P."/>
            <person name="Smolka M.B."/>
            <person name="Payne S.H."/>
            <person name="Bafna V."/>
            <person name="Eng J."/>
            <person name="Zhou H."/>
        </authorList>
    </citation>
    <scope>IDENTIFICATION BY MASS SPECTROMETRY [LARGE SCALE ANALYSIS]</scope>
</reference>
<reference key="7">
    <citation type="journal article" date="2012" name="Proc. Natl. Acad. Sci. U.S.A.">
        <title>N-terminal acetylome analyses and functional insights of the N-terminal acetyltransferase NatB.</title>
        <authorList>
            <person name="Van Damme P."/>
            <person name="Lasa M."/>
            <person name="Polevoda B."/>
            <person name="Gazquez C."/>
            <person name="Elosegui-Artola A."/>
            <person name="Kim D.S."/>
            <person name="De Juan-Pardo E."/>
            <person name="Demeyer K."/>
            <person name="Hole K."/>
            <person name="Larrea E."/>
            <person name="Timmerman E."/>
            <person name="Prieto J."/>
            <person name="Arnesen T."/>
            <person name="Sherman F."/>
            <person name="Gevaert K."/>
            <person name="Aldabe R."/>
        </authorList>
    </citation>
    <scope>IDENTIFICATION BY MASS SPECTROMETRY [LARGE SCALE ANALYSIS]</scope>
</reference>
<reference key="8">
    <citation type="journal article" date="2016" name="J. Biol. Chem.">
        <title>Saccharomyces cerevisiae forms D-2-hydroxyglutarate and couples its degradation to D-lactate formation via a cytosolic transhydrogenase.</title>
        <authorList>
            <person name="Becker-Kettern J."/>
            <person name="Paczia N."/>
            <person name="Conrotte J.F."/>
            <person name="Kay D.P."/>
            <person name="Guignard C."/>
            <person name="Jung P.P."/>
            <person name="Linster C.L."/>
        </authorList>
    </citation>
    <scope>FUNCTION</scope>
    <scope>CATALYTIC ACTIVITY</scope>
    <scope>BIOPHYSICOCHEMICAL PROPERTIES</scope>
    <source>
        <strain>ATCC 201388 / BY4741</strain>
    </source>
</reference>
<organism>
    <name type="scientific">Saccharomyces cerevisiae (strain ATCC 204508 / S288c)</name>
    <name type="common">Baker's yeast</name>
    <dbReference type="NCBI Taxonomy" id="559292"/>
    <lineage>
        <taxon>Eukaryota</taxon>
        <taxon>Fungi</taxon>
        <taxon>Dikarya</taxon>
        <taxon>Ascomycota</taxon>
        <taxon>Saccharomycotina</taxon>
        <taxon>Saccharomycetes</taxon>
        <taxon>Saccharomycetales</taxon>
        <taxon>Saccharomycetaceae</taxon>
        <taxon>Saccharomyces</taxon>
    </lineage>
</organism>
<protein>
    <recommendedName>
        <fullName evidence="7">D-2-hydroxyglutarate--pyruvate transhydrogenase DLD3</fullName>
        <shortName evidence="6">D-2HG--pyruvate transhydrogenase DLD3</shortName>
        <ecNumber evidence="5">1.1.99.40</ecNumber>
    </recommendedName>
    <alternativeName>
        <fullName evidence="7">(R)-2-hydroxyglutarate--pyruvate transhydrogenase</fullName>
    </alternativeName>
    <alternativeName>
        <fullName>D-lactate dehydrogenase [cytochrome] 3</fullName>
        <ecNumber>1.1.2.4</ecNumber>
    </alternativeName>
    <alternativeName>
        <fullName>D-lactate ferricytochrome C oxidoreductase</fullName>
        <shortName>D-LCR</shortName>
    </alternativeName>
</protein>
<feature type="chain" id="PRO_0000128176" description="D-2-hydroxyglutarate--pyruvate transhydrogenase DLD3">
    <location>
        <begin position="1"/>
        <end position="496"/>
    </location>
</feature>
<feature type="domain" description="FAD-binding PCMH-type" evidence="1">
    <location>
        <begin position="64"/>
        <end position="243"/>
    </location>
</feature>
<feature type="cross-link" description="Glycyl lysine isopeptide (Lys-Gly) (interchain with G-Cter in ubiquitin)" evidence="3">
    <location>
        <position position="17"/>
    </location>
</feature>
<name>DLD3_YEAST</name>
<proteinExistence type="evidence at protein level"/>
<gene>
    <name type="primary">DLD3</name>
    <name type="ordered locus">YEL071W</name>
</gene>
<sequence>MTAAHPVAQLTAEAYPKVKRNPNFKVLDSEDLAYFRSILSNDEILNSQAPEELASFNQDWMKKYRGQSNLILLPNSTDKVSKIMKYCNDKKLAVVPQGGNTDLVGASVPVFDEIVLSLRNMNKVRDFDPVSGTFKCDAGVVMRDAHQFLHDHDHIFPLDLPSRNNCQVGGVVSTNAGGLNFLRYGSLHGNVLGLEVVLPNGEIISNINALRKDNTGYDLKQLFIGAEGTIGVVTGVSIVAAAKPKALNAVFFGIENFDTVQKLFVKAKSELSEILSAFEFMDRGSIECTIEYLKDLPFPLENQHNFYVLIETSGSNKRHDDEKLTAFLKDTTDSKLISEGMMAKDKADFDRLWTWRKSVPTACNSYGGMYKYDMSLQLKDLYSVSAAVTERLNAAGLIGDAPKPVVKSCGYGHVGDGNIHLNIAVREFTKQIEDLLEPFVYEYIASKKGSISAEHGIGFHKKGKLHYTRSDIEIRFMKDIKNHYDPNGILNPYKYI</sequence>